<comment type="function">
    <text evidence="1">This is one of the proteins that bind and probably mediate the attachment of the 5S RNA into the large ribosomal subunit, where it forms part of the central protuberance.</text>
</comment>
<comment type="subunit">
    <text evidence="1">Part of the 50S ribosomal subunit; part of the 5S rRNA/L5/L18/L25 subcomplex. Contacts the 5S and 23S rRNAs.</text>
</comment>
<comment type="similarity">
    <text evidence="1">Belongs to the universal ribosomal protein uL18 family.</text>
</comment>
<name>RL18_BORBR</name>
<sequence>MDKKVSRLRRAVPTRRKIAQLRVHRLSVFRSNLHIYANIISPEGDRVLVSASTLEAEVRAQLGGAGKGGNATAAALVGKRVAEKAKAAGIELVAFDRSGFRYHGRVKALAEAAREAGLKF</sequence>
<accession>Q7WRA7</accession>
<reference key="1">
    <citation type="journal article" date="2003" name="Nat. Genet.">
        <title>Comparative analysis of the genome sequences of Bordetella pertussis, Bordetella parapertussis and Bordetella bronchiseptica.</title>
        <authorList>
            <person name="Parkhill J."/>
            <person name="Sebaihia M."/>
            <person name="Preston A."/>
            <person name="Murphy L.D."/>
            <person name="Thomson N.R."/>
            <person name="Harris D.E."/>
            <person name="Holden M.T.G."/>
            <person name="Churcher C.M."/>
            <person name="Bentley S.D."/>
            <person name="Mungall K.L."/>
            <person name="Cerdeno-Tarraga A.-M."/>
            <person name="Temple L."/>
            <person name="James K.D."/>
            <person name="Harris B."/>
            <person name="Quail M.A."/>
            <person name="Achtman M."/>
            <person name="Atkin R."/>
            <person name="Baker S."/>
            <person name="Basham D."/>
            <person name="Bason N."/>
            <person name="Cherevach I."/>
            <person name="Chillingworth T."/>
            <person name="Collins M."/>
            <person name="Cronin A."/>
            <person name="Davis P."/>
            <person name="Doggett J."/>
            <person name="Feltwell T."/>
            <person name="Goble A."/>
            <person name="Hamlin N."/>
            <person name="Hauser H."/>
            <person name="Holroyd S."/>
            <person name="Jagels K."/>
            <person name="Leather S."/>
            <person name="Moule S."/>
            <person name="Norberczak H."/>
            <person name="O'Neil S."/>
            <person name="Ormond D."/>
            <person name="Price C."/>
            <person name="Rabbinowitsch E."/>
            <person name="Rutter S."/>
            <person name="Sanders M."/>
            <person name="Saunders D."/>
            <person name="Seeger K."/>
            <person name="Sharp S."/>
            <person name="Simmonds M."/>
            <person name="Skelton J."/>
            <person name="Squares R."/>
            <person name="Squares S."/>
            <person name="Stevens K."/>
            <person name="Unwin L."/>
            <person name="Whitehead S."/>
            <person name="Barrell B.G."/>
            <person name="Maskell D.J."/>
        </authorList>
    </citation>
    <scope>NUCLEOTIDE SEQUENCE [LARGE SCALE GENOMIC DNA]</scope>
    <source>
        <strain>ATCC BAA-588 / NCTC 13252 / RB50</strain>
    </source>
</reference>
<keyword id="KW-0687">Ribonucleoprotein</keyword>
<keyword id="KW-0689">Ribosomal protein</keyword>
<keyword id="KW-0694">RNA-binding</keyword>
<keyword id="KW-0699">rRNA-binding</keyword>
<feature type="chain" id="PRO_0000131222" description="Large ribosomal subunit protein uL18">
    <location>
        <begin position="1"/>
        <end position="120"/>
    </location>
</feature>
<gene>
    <name evidence="1" type="primary">rplR</name>
    <name type="ordered locus">BB0047</name>
</gene>
<protein>
    <recommendedName>
        <fullName evidence="1">Large ribosomal subunit protein uL18</fullName>
    </recommendedName>
    <alternativeName>
        <fullName evidence="2">50S ribosomal protein L18</fullName>
    </alternativeName>
</protein>
<organism>
    <name type="scientific">Bordetella bronchiseptica (strain ATCC BAA-588 / NCTC 13252 / RB50)</name>
    <name type="common">Alcaligenes bronchisepticus</name>
    <dbReference type="NCBI Taxonomy" id="257310"/>
    <lineage>
        <taxon>Bacteria</taxon>
        <taxon>Pseudomonadati</taxon>
        <taxon>Pseudomonadota</taxon>
        <taxon>Betaproteobacteria</taxon>
        <taxon>Burkholderiales</taxon>
        <taxon>Alcaligenaceae</taxon>
        <taxon>Bordetella</taxon>
    </lineage>
</organism>
<proteinExistence type="inferred from homology"/>
<dbReference type="EMBL" id="BX640437">
    <property type="protein sequence ID" value="CAE30549.1"/>
    <property type="molecule type" value="Genomic_DNA"/>
</dbReference>
<dbReference type="RefSeq" id="WP_003806922.1">
    <property type="nucleotide sequence ID" value="NC_002927.3"/>
</dbReference>
<dbReference type="SMR" id="Q7WRA7"/>
<dbReference type="GeneID" id="93206277"/>
<dbReference type="KEGG" id="bbr:BB0047"/>
<dbReference type="eggNOG" id="COG0256">
    <property type="taxonomic scope" value="Bacteria"/>
</dbReference>
<dbReference type="HOGENOM" id="CLU_098841_0_1_4"/>
<dbReference type="Proteomes" id="UP000001027">
    <property type="component" value="Chromosome"/>
</dbReference>
<dbReference type="GO" id="GO:0022625">
    <property type="term" value="C:cytosolic large ribosomal subunit"/>
    <property type="evidence" value="ECO:0007669"/>
    <property type="project" value="TreeGrafter"/>
</dbReference>
<dbReference type="GO" id="GO:0008097">
    <property type="term" value="F:5S rRNA binding"/>
    <property type="evidence" value="ECO:0007669"/>
    <property type="project" value="TreeGrafter"/>
</dbReference>
<dbReference type="GO" id="GO:0003735">
    <property type="term" value="F:structural constituent of ribosome"/>
    <property type="evidence" value="ECO:0007669"/>
    <property type="project" value="InterPro"/>
</dbReference>
<dbReference type="GO" id="GO:0006412">
    <property type="term" value="P:translation"/>
    <property type="evidence" value="ECO:0007669"/>
    <property type="project" value="UniProtKB-UniRule"/>
</dbReference>
<dbReference type="CDD" id="cd00432">
    <property type="entry name" value="Ribosomal_L18_L5e"/>
    <property type="match status" value="1"/>
</dbReference>
<dbReference type="FunFam" id="3.30.420.100:FF:000001">
    <property type="entry name" value="50S ribosomal protein L18"/>
    <property type="match status" value="1"/>
</dbReference>
<dbReference type="Gene3D" id="3.30.420.100">
    <property type="match status" value="1"/>
</dbReference>
<dbReference type="HAMAP" id="MF_01337_B">
    <property type="entry name" value="Ribosomal_uL18_B"/>
    <property type="match status" value="1"/>
</dbReference>
<dbReference type="InterPro" id="IPR004389">
    <property type="entry name" value="Ribosomal_uL18_bac-type"/>
</dbReference>
<dbReference type="InterPro" id="IPR005484">
    <property type="entry name" value="Ribosomal_uL18_bac/euk"/>
</dbReference>
<dbReference type="NCBIfam" id="TIGR00060">
    <property type="entry name" value="L18_bact"/>
    <property type="match status" value="1"/>
</dbReference>
<dbReference type="PANTHER" id="PTHR12899">
    <property type="entry name" value="39S RIBOSOMAL PROTEIN L18, MITOCHONDRIAL"/>
    <property type="match status" value="1"/>
</dbReference>
<dbReference type="PANTHER" id="PTHR12899:SF3">
    <property type="entry name" value="LARGE RIBOSOMAL SUBUNIT PROTEIN UL18M"/>
    <property type="match status" value="1"/>
</dbReference>
<dbReference type="Pfam" id="PF00861">
    <property type="entry name" value="Ribosomal_L18p"/>
    <property type="match status" value="1"/>
</dbReference>
<dbReference type="SUPFAM" id="SSF53137">
    <property type="entry name" value="Translational machinery components"/>
    <property type="match status" value="1"/>
</dbReference>
<evidence type="ECO:0000255" key="1">
    <source>
        <dbReference type="HAMAP-Rule" id="MF_01337"/>
    </source>
</evidence>
<evidence type="ECO:0000305" key="2"/>